<comment type="function">
    <text evidence="3">Has hemolytic activity and also inhibits the growth of gonococci.</text>
</comment>
<comment type="subcellular location">
    <subcellularLocation>
        <location evidence="1">Secreted</location>
    </subcellularLocation>
</comment>
<comment type="similarity">
    <text evidence="5">Belongs to the staphylococcal hemolytic protein family.</text>
</comment>
<organism>
    <name type="scientific">Staphylococcus haemolyticus</name>
    <dbReference type="NCBI Taxonomy" id="1283"/>
    <lineage>
        <taxon>Bacteria</taxon>
        <taxon>Bacillati</taxon>
        <taxon>Bacillota</taxon>
        <taxon>Bacilli</taxon>
        <taxon>Bacillales</taxon>
        <taxon>Staphylococcaceae</taxon>
        <taxon>Staphylococcus</taxon>
    </lineage>
</organism>
<name>GGI3_STAHA</name>
<protein>
    <recommendedName>
        <fullName>Antibacterial protein 3</fullName>
    </recommendedName>
    <alternativeName>
        <fullName>Gonococcal growth inhibitor III</fullName>
    </alternativeName>
</protein>
<sequence>MSKLVQAISDAVQAQQNQDWAKLGTSIVGIVENGVGILGKLFGF</sequence>
<reference key="1">
    <citation type="journal article" date="1988" name="Biochem. J.">
        <title>The amino acid sequence of a gonococcal growth inhibitor from Staphylococcus haemolyticus.</title>
        <authorList>
            <person name="Watson D.C."/>
            <person name="Yaguchi M."/>
            <person name="Bisaillon J.G."/>
            <person name="Beaudet R."/>
            <person name="Morosoli R."/>
        </authorList>
    </citation>
    <scope>PROTEIN SEQUENCE</scope>
    <scope>FUNCTION</scope>
    <scope>FORMYLATION AT MET-1</scope>
</reference>
<feature type="chain" id="PRO_0000087484" description="Antibacterial protein 3">
    <location>
        <begin position="1"/>
        <end position="44"/>
    </location>
</feature>
<feature type="modified residue" description="N-formylmethionine" evidence="2 4">
    <location>
        <position position="1"/>
    </location>
</feature>
<evidence type="ECO:0000250" key="1"/>
<evidence type="ECO:0000255" key="2"/>
<evidence type="ECO:0000269" key="3">
    <source>
    </source>
</evidence>
<evidence type="ECO:0000303" key="4">
    <source>
    </source>
</evidence>
<evidence type="ECO:0000305" key="5"/>
<keyword id="KW-0044">Antibiotic</keyword>
<keyword id="KW-0929">Antimicrobial</keyword>
<keyword id="KW-0204">Cytolysis</keyword>
<keyword id="KW-0903">Direct protein sequencing</keyword>
<keyword id="KW-0291">Formylation</keyword>
<keyword id="KW-0354">Hemolysis</keyword>
<keyword id="KW-0964">Secreted</keyword>
<keyword id="KW-0800">Toxin</keyword>
<keyword id="KW-0843">Virulence</keyword>
<dbReference type="PIR" id="S00601">
    <property type="entry name" value="BXSA3"/>
</dbReference>
<dbReference type="SMR" id="P11699"/>
<dbReference type="STRING" id="1283.ShL2_01676"/>
<dbReference type="GO" id="GO:0005576">
    <property type="term" value="C:extracellular region"/>
    <property type="evidence" value="ECO:0007669"/>
    <property type="project" value="UniProtKB-SubCell"/>
</dbReference>
<dbReference type="GO" id="GO:0090729">
    <property type="term" value="F:toxin activity"/>
    <property type="evidence" value="ECO:0007669"/>
    <property type="project" value="UniProtKB-KW"/>
</dbReference>
<dbReference type="GO" id="GO:0042742">
    <property type="term" value="P:defense response to bacterium"/>
    <property type="evidence" value="ECO:0007669"/>
    <property type="project" value="UniProtKB-KW"/>
</dbReference>
<dbReference type="GO" id="GO:0031640">
    <property type="term" value="P:killing of cells of another organism"/>
    <property type="evidence" value="ECO:0007669"/>
    <property type="project" value="UniProtKB-KW"/>
</dbReference>
<dbReference type="InterPro" id="IPR008846">
    <property type="entry name" value="PSMbeta"/>
</dbReference>
<dbReference type="Pfam" id="PF05480">
    <property type="entry name" value="PSMbeta"/>
    <property type="match status" value="1"/>
</dbReference>
<accession>P11699</accession>
<proteinExistence type="evidence at protein level"/>